<dbReference type="EMBL" id="U33322">
    <property type="protein sequence ID" value="AAA75109.1"/>
    <property type="molecule type" value="Genomic_DNA"/>
</dbReference>
<dbReference type="EMBL" id="CP000100">
    <property type="protein sequence ID" value="ABB56033.1"/>
    <property type="status" value="ALT_INIT"/>
    <property type="molecule type" value="Genomic_DNA"/>
</dbReference>
<dbReference type="RefSeq" id="WP_070105208.1">
    <property type="nucleotide sequence ID" value="NZ_JACJTX010000002.1"/>
</dbReference>
<dbReference type="SMR" id="P52023"/>
<dbReference type="STRING" id="1140.Synpcc7942_0001"/>
<dbReference type="PaxDb" id="1140-Synpcc7942_0001"/>
<dbReference type="GeneID" id="72428809"/>
<dbReference type="KEGG" id="syf:Synpcc7942_0001"/>
<dbReference type="eggNOG" id="COG0592">
    <property type="taxonomic scope" value="Bacteria"/>
</dbReference>
<dbReference type="HOGENOM" id="CLU_038149_4_1_3"/>
<dbReference type="OrthoDB" id="8421503at2"/>
<dbReference type="BioCyc" id="SYNEL:SYNPCC7942_0001-MONOMER"/>
<dbReference type="Proteomes" id="UP000889800">
    <property type="component" value="Chromosome"/>
</dbReference>
<dbReference type="GO" id="GO:0005737">
    <property type="term" value="C:cytoplasm"/>
    <property type="evidence" value="ECO:0007669"/>
    <property type="project" value="UniProtKB-SubCell"/>
</dbReference>
<dbReference type="GO" id="GO:0009360">
    <property type="term" value="C:DNA polymerase III complex"/>
    <property type="evidence" value="ECO:0007669"/>
    <property type="project" value="InterPro"/>
</dbReference>
<dbReference type="GO" id="GO:0008408">
    <property type="term" value="F:3'-5' exonuclease activity"/>
    <property type="evidence" value="ECO:0007669"/>
    <property type="project" value="InterPro"/>
</dbReference>
<dbReference type="GO" id="GO:0003677">
    <property type="term" value="F:DNA binding"/>
    <property type="evidence" value="ECO:0007669"/>
    <property type="project" value="UniProtKB-KW"/>
</dbReference>
<dbReference type="GO" id="GO:0003887">
    <property type="term" value="F:DNA-directed DNA polymerase activity"/>
    <property type="evidence" value="ECO:0007669"/>
    <property type="project" value="UniProtKB-KW"/>
</dbReference>
<dbReference type="GO" id="GO:0006271">
    <property type="term" value="P:DNA strand elongation involved in DNA replication"/>
    <property type="evidence" value="ECO:0007669"/>
    <property type="project" value="TreeGrafter"/>
</dbReference>
<dbReference type="CDD" id="cd00140">
    <property type="entry name" value="beta_clamp"/>
    <property type="match status" value="1"/>
</dbReference>
<dbReference type="Gene3D" id="3.70.10.10">
    <property type="match status" value="1"/>
</dbReference>
<dbReference type="Gene3D" id="3.10.150.10">
    <property type="entry name" value="DNA Polymerase III, subunit A, domain 2"/>
    <property type="match status" value="1"/>
</dbReference>
<dbReference type="InterPro" id="IPR046938">
    <property type="entry name" value="DNA_clamp_sf"/>
</dbReference>
<dbReference type="InterPro" id="IPR001001">
    <property type="entry name" value="DNA_polIII_beta"/>
</dbReference>
<dbReference type="InterPro" id="IPR022635">
    <property type="entry name" value="DNA_polIII_beta_C"/>
</dbReference>
<dbReference type="InterPro" id="IPR022637">
    <property type="entry name" value="DNA_polIII_beta_cen"/>
</dbReference>
<dbReference type="InterPro" id="IPR022634">
    <property type="entry name" value="DNA_polIII_beta_N"/>
</dbReference>
<dbReference type="NCBIfam" id="TIGR00663">
    <property type="entry name" value="dnan"/>
    <property type="match status" value="1"/>
</dbReference>
<dbReference type="PANTHER" id="PTHR30478:SF0">
    <property type="entry name" value="BETA SLIDING CLAMP"/>
    <property type="match status" value="1"/>
</dbReference>
<dbReference type="PANTHER" id="PTHR30478">
    <property type="entry name" value="DNA POLYMERASE III SUBUNIT BETA"/>
    <property type="match status" value="1"/>
</dbReference>
<dbReference type="Pfam" id="PF00712">
    <property type="entry name" value="DNA_pol3_beta"/>
    <property type="match status" value="1"/>
</dbReference>
<dbReference type="Pfam" id="PF02767">
    <property type="entry name" value="DNA_pol3_beta_2"/>
    <property type="match status" value="1"/>
</dbReference>
<dbReference type="Pfam" id="PF02768">
    <property type="entry name" value="DNA_pol3_beta_3"/>
    <property type="match status" value="1"/>
</dbReference>
<dbReference type="PIRSF" id="PIRSF000804">
    <property type="entry name" value="DNA_pol_III_b"/>
    <property type="match status" value="1"/>
</dbReference>
<dbReference type="SMART" id="SM00480">
    <property type="entry name" value="POL3Bc"/>
    <property type="match status" value="1"/>
</dbReference>
<dbReference type="SUPFAM" id="SSF55979">
    <property type="entry name" value="DNA clamp"/>
    <property type="match status" value="3"/>
</dbReference>
<evidence type="ECO:0000250" key="1">
    <source>
        <dbReference type="UniProtKB" id="P0A988"/>
    </source>
</evidence>
<evidence type="ECO:0000305" key="2"/>
<sequence length="375" mass="40466">MKLVCRQNELNTSLSLVSRAVPSRPNHPVLANVLLAADAGTQRLSLTAFDLSLGIQTSFAAQVERSGAITLPAKLLNDIVSRLPNDSDVTLEDNDAAATLSVGSGQYQMRGISADEFPELPLVQSQEALQLSASALIEGLRGTLFATSGDETKQILTGVHLKVQPDGLEFAATDGHRLAVVKTENAAATPATEFAVTVPSRALRDLERMIAIRGSDEAIALYHDQGQTVFQWGDQYLTSRTLDGQYPNYGQLIPREFNRNVAVDRKRLLAALERIAVLADQQNNAIRLSLDPENNRLALAVDAQDVGSGQEAVPAEIIGEPLEIAFNVRYLAEGLKALNTTDIQIQLNSNTSPVVLSPLGPVKITYLVMPIQLRS</sequence>
<organism>
    <name type="scientific">Synechococcus elongatus (strain ATCC 33912 / PCC 7942 / FACHB-805)</name>
    <name type="common">Anacystis nidulans R2</name>
    <dbReference type="NCBI Taxonomy" id="1140"/>
    <lineage>
        <taxon>Bacteria</taxon>
        <taxon>Bacillati</taxon>
        <taxon>Cyanobacteriota</taxon>
        <taxon>Cyanophyceae</taxon>
        <taxon>Synechococcales</taxon>
        <taxon>Synechococcaceae</taxon>
        <taxon>Synechococcus</taxon>
    </lineage>
</organism>
<name>DPO3B_SYNE7</name>
<accession>P52023</accession>
<accession>Q31SD6</accession>
<reference key="1">
    <citation type="journal article" date="1996" name="Gene">
        <title>An unusual gene arrangement for the putative chromosome replication origin and circadian expression of dnaN in Synechococcus sp. strain PCC 7942.</title>
        <authorList>
            <person name="Liu Y."/>
            <person name="Tsinoremas N.F."/>
        </authorList>
    </citation>
    <scope>NUCLEOTIDE SEQUENCE [GENOMIC DNA]</scope>
</reference>
<reference key="2">
    <citation type="submission" date="2005-08" db="EMBL/GenBank/DDBJ databases">
        <title>Complete sequence of chromosome 1 of Synechococcus elongatus PCC 7942.</title>
        <authorList>
            <consortium name="US DOE Joint Genome Institute"/>
            <person name="Copeland A."/>
            <person name="Lucas S."/>
            <person name="Lapidus A."/>
            <person name="Barry K."/>
            <person name="Detter J.C."/>
            <person name="Glavina T."/>
            <person name="Hammon N."/>
            <person name="Israni S."/>
            <person name="Pitluck S."/>
            <person name="Schmutz J."/>
            <person name="Larimer F."/>
            <person name="Land M."/>
            <person name="Kyrpides N."/>
            <person name="Lykidis A."/>
            <person name="Golden S."/>
            <person name="Richardson P."/>
        </authorList>
    </citation>
    <scope>NUCLEOTIDE SEQUENCE [LARGE SCALE GENOMIC DNA]</scope>
    <source>
        <strain>ATCC 33912 / PCC 7942 / FACHB-805</strain>
    </source>
</reference>
<protein>
    <recommendedName>
        <fullName>Beta sliding clamp</fullName>
        <shortName>Beta clamp</shortName>
        <shortName>Sliding clamp</shortName>
    </recommendedName>
    <alternativeName>
        <fullName>Beta-clamp processivity factor</fullName>
    </alternativeName>
    <alternativeName>
        <fullName>DNA polymerase III beta sliding clamp subunit</fullName>
    </alternativeName>
    <alternativeName>
        <fullName>DNA polymerase III subunit beta</fullName>
    </alternativeName>
</protein>
<comment type="function">
    <text evidence="1">Confers DNA tethering and processivity to DNA polymerases and other proteins. Acts as a clamp, forming a ring around DNA (a reaction catalyzed by the clamp-loading complex) which diffuses in an ATP-independent manner freely and bidirectionally along dsDNA. Initially characterized for its ability to contact the catalytic subunit of DNA polymerase III (Pol III), a complex, multichain enzyme responsible for most of the replicative synthesis in bacteria; Pol III exhibits 3'-5' exonuclease proofreading activity. The beta chain is required for initiation of replication as well as for processivity of DNA replication.</text>
</comment>
<comment type="subunit">
    <text evidence="1">Forms a ring-shaped head-to-tail homodimer around DNA which binds and tethers DNA polymerases and other proteins to the DNA. The DNA replisome complex has a single clamp-loading complex (3 tau and 1 each of delta, delta', psi and chi subunits) which binds 3 Pol III cores (1 core on the leading strand and 2 on the lagging strand) each with a beta sliding clamp dimer. Additional proteins in the replisome are other copies of gamma, psi and chi, Ssb, DNA helicase and RNA primase.</text>
</comment>
<comment type="subcellular location">
    <subcellularLocation>
        <location evidence="1">Cytoplasm</location>
    </subcellularLocation>
</comment>
<comment type="similarity">
    <text evidence="2">Belongs to the beta sliding clamp family.</text>
</comment>
<comment type="sequence caution" evidence="2">
    <conflict type="erroneous initiation">
        <sequence resource="EMBL-CDS" id="ABB56033"/>
    </conflict>
    <text>Extended N-terminus.</text>
</comment>
<feature type="chain" id="PRO_0000105474" description="Beta sliding clamp">
    <location>
        <begin position="1"/>
        <end position="375"/>
    </location>
</feature>
<proteinExistence type="inferred from homology"/>
<keyword id="KW-0963">Cytoplasm</keyword>
<keyword id="KW-0235">DNA replication</keyword>
<keyword id="KW-0238">DNA-binding</keyword>
<keyword id="KW-0239">DNA-directed DNA polymerase</keyword>
<keyword id="KW-0548">Nucleotidyltransferase</keyword>
<keyword id="KW-1185">Reference proteome</keyword>
<keyword id="KW-0808">Transferase</keyword>
<gene>
    <name type="primary">dnaN</name>
    <name type="ordered locus">Synpcc7942_0001</name>
</gene>